<dbReference type="EC" id="6.1.1.4" evidence="1"/>
<dbReference type="EMBL" id="CP000381">
    <property type="protein sequence ID" value="ABX72531.1"/>
    <property type="status" value="ALT_INIT"/>
    <property type="molecule type" value="Genomic_DNA"/>
</dbReference>
<dbReference type="RefSeq" id="WP_025462004.1">
    <property type="nucleotide sequence ID" value="NC_010120.1"/>
</dbReference>
<dbReference type="SMR" id="A9M162"/>
<dbReference type="KEGG" id="nmn:NMCC_0323"/>
<dbReference type="HOGENOM" id="CLU_004427_0_0_4"/>
<dbReference type="Proteomes" id="UP000001177">
    <property type="component" value="Chromosome"/>
</dbReference>
<dbReference type="GO" id="GO:0005829">
    <property type="term" value="C:cytosol"/>
    <property type="evidence" value="ECO:0007669"/>
    <property type="project" value="TreeGrafter"/>
</dbReference>
<dbReference type="GO" id="GO:0002161">
    <property type="term" value="F:aminoacyl-tRNA deacylase activity"/>
    <property type="evidence" value="ECO:0007669"/>
    <property type="project" value="InterPro"/>
</dbReference>
<dbReference type="GO" id="GO:0005524">
    <property type="term" value="F:ATP binding"/>
    <property type="evidence" value="ECO:0007669"/>
    <property type="project" value="UniProtKB-UniRule"/>
</dbReference>
<dbReference type="GO" id="GO:0004823">
    <property type="term" value="F:leucine-tRNA ligase activity"/>
    <property type="evidence" value="ECO:0007669"/>
    <property type="project" value="UniProtKB-UniRule"/>
</dbReference>
<dbReference type="GO" id="GO:0006429">
    <property type="term" value="P:leucyl-tRNA aminoacylation"/>
    <property type="evidence" value="ECO:0007669"/>
    <property type="project" value="UniProtKB-UniRule"/>
</dbReference>
<dbReference type="CDD" id="cd07958">
    <property type="entry name" value="Anticodon_Ia_Leu_BEm"/>
    <property type="match status" value="1"/>
</dbReference>
<dbReference type="CDD" id="cd00812">
    <property type="entry name" value="LeuRS_core"/>
    <property type="match status" value="1"/>
</dbReference>
<dbReference type="FunFam" id="1.10.730.10:FF:000003">
    <property type="entry name" value="Leucine--tRNA ligase"/>
    <property type="match status" value="1"/>
</dbReference>
<dbReference type="FunFam" id="2.20.28.290:FF:000001">
    <property type="entry name" value="Leucine--tRNA ligase"/>
    <property type="match status" value="1"/>
</dbReference>
<dbReference type="FunFam" id="3.10.20.590:FF:000001">
    <property type="entry name" value="Leucine--tRNA ligase"/>
    <property type="match status" value="1"/>
</dbReference>
<dbReference type="FunFam" id="3.40.50.620:FF:000003">
    <property type="entry name" value="Leucine--tRNA ligase"/>
    <property type="match status" value="1"/>
</dbReference>
<dbReference type="FunFam" id="3.40.50.620:FF:000124">
    <property type="entry name" value="Leucine--tRNA ligase"/>
    <property type="match status" value="1"/>
</dbReference>
<dbReference type="FunFam" id="3.90.740.10:FF:000012">
    <property type="entry name" value="Leucine--tRNA ligase"/>
    <property type="match status" value="1"/>
</dbReference>
<dbReference type="Gene3D" id="2.20.28.290">
    <property type="match status" value="1"/>
</dbReference>
<dbReference type="Gene3D" id="3.10.20.590">
    <property type="match status" value="1"/>
</dbReference>
<dbReference type="Gene3D" id="3.40.50.620">
    <property type="entry name" value="HUPs"/>
    <property type="match status" value="2"/>
</dbReference>
<dbReference type="Gene3D" id="1.10.730.10">
    <property type="entry name" value="Isoleucyl-tRNA Synthetase, Domain 1"/>
    <property type="match status" value="2"/>
</dbReference>
<dbReference type="Gene3D" id="3.90.740.10">
    <property type="entry name" value="Valyl/Leucyl/Isoleucyl-tRNA synthetase, editing domain"/>
    <property type="match status" value="1"/>
</dbReference>
<dbReference type="HAMAP" id="MF_00049_B">
    <property type="entry name" value="Leu_tRNA_synth_B"/>
    <property type="match status" value="1"/>
</dbReference>
<dbReference type="InterPro" id="IPR001412">
    <property type="entry name" value="aa-tRNA-synth_I_CS"/>
</dbReference>
<dbReference type="InterPro" id="IPR002300">
    <property type="entry name" value="aa-tRNA-synth_Ia"/>
</dbReference>
<dbReference type="InterPro" id="IPR002302">
    <property type="entry name" value="Leu-tRNA-ligase"/>
</dbReference>
<dbReference type="InterPro" id="IPR025709">
    <property type="entry name" value="Leu_tRNA-synth_edit"/>
</dbReference>
<dbReference type="InterPro" id="IPR013155">
    <property type="entry name" value="M/V/L/I-tRNA-synth_anticd-bd"/>
</dbReference>
<dbReference type="InterPro" id="IPR015413">
    <property type="entry name" value="Methionyl/Leucyl_tRNA_Synth"/>
</dbReference>
<dbReference type="InterPro" id="IPR014729">
    <property type="entry name" value="Rossmann-like_a/b/a_fold"/>
</dbReference>
<dbReference type="InterPro" id="IPR009080">
    <property type="entry name" value="tRNAsynth_Ia_anticodon-bd"/>
</dbReference>
<dbReference type="InterPro" id="IPR009008">
    <property type="entry name" value="Val/Leu/Ile-tRNA-synth_edit"/>
</dbReference>
<dbReference type="NCBIfam" id="TIGR00396">
    <property type="entry name" value="leuS_bact"/>
    <property type="match status" value="1"/>
</dbReference>
<dbReference type="PANTHER" id="PTHR43740:SF2">
    <property type="entry name" value="LEUCINE--TRNA LIGASE, MITOCHONDRIAL"/>
    <property type="match status" value="1"/>
</dbReference>
<dbReference type="PANTHER" id="PTHR43740">
    <property type="entry name" value="LEUCYL-TRNA SYNTHETASE"/>
    <property type="match status" value="1"/>
</dbReference>
<dbReference type="Pfam" id="PF08264">
    <property type="entry name" value="Anticodon_1"/>
    <property type="match status" value="1"/>
</dbReference>
<dbReference type="Pfam" id="PF00133">
    <property type="entry name" value="tRNA-synt_1"/>
    <property type="match status" value="2"/>
</dbReference>
<dbReference type="Pfam" id="PF13603">
    <property type="entry name" value="tRNA-synt_1_2"/>
    <property type="match status" value="1"/>
</dbReference>
<dbReference type="Pfam" id="PF09334">
    <property type="entry name" value="tRNA-synt_1g"/>
    <property type="match status" value="1"/>
</dbReference>
<dbReference type="PRINTS" id="PR00985">
    <property type="entry name" value="TRNASYNTHLEU"/>
</dbReference>
<dbReference type="SUPFAM" id="SSF47323">
    <property type="entry name" value="Anticodon-binding domain of a subclass of class I aminoacyl-tRNA synthetases"/>
    <property type="match status" value="1"/>
</dbReference>
<dbReference type="SUPFAM" id="SSF52374">
    <property type="entry name" value="Nucleotidylyl transferase"/>
    <property type="match status" value="1"/>
</dbReference>
<dbReference type="SUPFAM" id="SSF50677">
    <property type="entry name" value="ValRS/IleRS/LeuRS editing domain"/>
    <property type="match status" value="1"/>
</dbReference>
<dbReference type="PROSITE" id="PS00178">
    <property type="entry name" value="AA_TRNA_LIGASE_I"/>
    <property type="match status" value="1"/>
</dbReference>
<evidence type="ECO:0000255" key="1">
    <source>
        <dbReference type="HAMAP-Rule" id="MF_00049"/>
    </source>
</evidence>
<evidence type="ECO:0000305" key="2"/>
<gene>
    <name evidence="1" type="primary">leuS</name>
    <name type="ordered locus">NMCC_0323</name>
</gene>
<feature type="chain" id="PRO_0000334781" description="Leucine--tRNA ligase">
    <location>
        <begin position="1"/>
        <end position="876"/>
    </location>
</feature>
<feature type="short sequence motif" description="'HIGH' region">
    <location>
        <begin position="42"/>
        <end position="52"/>
    </location>
</feature>
<feature type="short sequence motif" description="'KMSKS' region">
    <location>
        <begin position="634"/>
        <end position="638"/>
    </location>
</feature>
<feature type="binding site" evidence="1">
    <location>
        <position position="637"/>
    </location>
    <ligand>
        <name>ATP</name>
        <dbReference type="ChEBI" id="CHEBI:30616"/>
    </ligand>
</feature>
<organism>
    <name type="scientific">Neisseria meningitidis serogroup C (strain 053442)</name>
    <dbReference type="NCBI Taxonomy" id="374833"/>
    <lineage>
        <taxon>Bacteria</taxon>
        <taxon>Pseudomonadati</taxon>
        <taxon>Pseudomonadota</taxon>
        <taxon>Betaproteobacteria</taxon>
        <taxon>Neisseriales</taxon>
        <taxon>Neisseriaceae</taxon>
        <taxon>Neisseria</taxon>
    </lineage>
</organism>
<name>SYL_NEIM0</name>
<sequence length="876" mass="98117">MQEQYRPAAIEPAAQKKWDDARIFNVSEDASKPKYYCLSMFPYPSGKLHMGHVRNYTIGDVLSRFKRLNGFNVMQPMGWDAFGMPAENAAMKNNVAPAAWTYDNIEYMKTQLKSLGFAIDWARETATCKPEYYRWEQWLFTKLFEKGIVYRKNGTVNWDPVDQTVLANEQVIDGRGWRSGALIEKREIPMYYFKITDYAEELLNDLDKLEHWPEQVKTMQRNWIGKSRGMTVRFAVSDDSKQGLEGDYARFLQVYTTRPDTLMGATYVAVAAEHPLATAAAADKPELQAFIAECKAGSVAEADMATMEKKGVPTGRYVVNPLNGDKLEVWIANYVLWGYGDGAVMAVPAHDERDFEFATKYSLPKKQVIAVGDNAFDANQWQEWYGDKENGVLVNSGDLDGMNFQTAFDAIAAKLQSQGAGEPKTQYRLRDWGISRQRYWGCPIPIVHCEQCGDVPVPADQLPVVLPENVVPDGMGSPLAKMPEFYETACPCCGGAAKRETDTMDTFMESSWYFFRYMSPKFSDGMVSAEAAKYWGAVDQYIGGIEHAILHLLYARFFTKLMRDEGLVNVDEPFERLLTQGMVVCETYYRENDKGGKDWINPADVELTFDDKGRPVSAVLKADGLPVVISGTEKMSKSKNNGVDPQELINAYGADTARLFMMFAAPPEQSLEWSDSGVEGAHRFLRRLWRTVYEYLKQGGAVKAFAGNQDGLSKELKDLRHKLHSTIAKVSDDYGRRQQFNTAIAAVMELLNQYDKTDTGSEQGRAVAQEVLETAVRLLWPIVPHICETLWSELNGAKLWEAGWPAVDEAALVKSEIEVMVQVNGKLRGKITVAADASKADLEAAALATEGAVKFMEGKPAKKIIVVPGRLVNIVV</sequence>
<accession>A9M162</accession>
<comment type="catalytic activity">
    <reaction evidence="1">
        <text>tRNA(Leu) + L-leucine + ATP = L-leucyl-tRNA(Leu) + AMP + diphosphate</text>
        <dbReference type="Rhea" id="RHEA:11688"/>
        <dbReference type="Rhea" id="RHEA-COMP:9613"/>
        <dbReference type="Rhea" id="RHEA-COMP:9622"/>
        <dbReference type="ChEBI" id="CHEBI:30616"/>
        <dbReference type="ChEBI" id="CHEBI:33019"/>
        <dbReference type="ChEBI" id="CHEBI:57427"/>
        <dbReference type="ChEBI" id="CHEBI:78442"/>
        <dbReference type="ChEBI" id="CHEBI:78494"/>
        <dbReference type="ChEBI" id="CHEBI:456215"/>
        <dbReference type="EC" id="6.1.1.4"/>
    </reaction>
</comment>
<comment type="subcellular location">
    <subcellularLocation>
        <location evidence="1">Cytoplasm</location>
    </subcellularLocation>
</comment>
<comment type="similarity">
    <text evidence="1">Belongs to the class-I aminoacyl-tRNA synthetase family.</text>
</comment>
<comment type="sequence caution" evidence="2">
    <conflict type="erroneous initiation">
        <sequence resource="EMBL-CDS" id="ABX72531"/>
    </conflict>
</comment>
<proteinExistence type="inferred from homology"/>
<keyword id="KW-0030">Aminoacyl-tRNA synthetase</keyword>
<keyword id="KW-0067">ATP-binding</keyword>
<keyword id="KW-0963">Cytoplasm</keyword>
<keyword id="KW-0436">Ligase</keyword>
<keyword id="KW-0547">Nucleotide-binding</keyword>
<keyword id="KW-0648">Protein biosynthesis</keyword>
<protein>
    <recommendedName>
        <fullName evidence="1">Leucine--tRNA ligase</fullName>
        <ecNumber evidence="1">6.1.1.4</ecNumber>
    </recommendedName>
    <alternativeName>
        <fullName evidence="1">Leucyl-tRNA synthetase</fullName>
        <shortName evidence="1">LeuRS</shortName>
    </alternativeName>
</protein>
<reference key="1">
    <citation type="journal article" date="2008" name="Genomics">
        <title>Characterization of ST-4821 complex, a unique Neisseria meningitidis clone.</title>
        <authorList>
            <person name="Peng J."/>
            <person name="Yang L."/>
            <person name="Yang F."/>
            <person name="Yang J."/>
            <person name="Yan Y."/>
            <person name="Nie H."/>
            <person name="Zhang X."/>
            <person name="Xiong Z."/>
            <person name="Jiang Y."/>
            <person name="Cheng F."/>
            <person name="Xu X."/>
            <person name="Chen S."/>
            <person name="Sun L."/>
            <person name="Li W."/>
            <person name="Shen Y."/>
            <person name="Shao Z."/>
            <person name="Liang X."/>
            <person name="Xu J."/>
            <person name="Jin Q."/>
        </authorList>
    </citation>
    <scope>NUCLEOTIDE SEQUENCE [LARGE SCALE GENOMIC DNA]</scope>
    <source>
        <strain>053442</strain>
    </source>
</reference>